<organism>
    <name type="scientific">Hydrogenovibrio crunogenus (strain DSM 25203 / XCL-2)</name>
    <name type="common">Thiomicrospira crunogena</name>
    <dbReference type="NCBI Taxonomy" id="317025"/>
    <lineage>
        <taxon>Bacteria</taxon>
        <taxon>Pseudomonadati</taxon>
        <taxon>Pseudomonadota</taxon>
        <taxon>Gammaproteobacteria</taxon>
        <taxon>Thiotrichales</taxon>
        <taxon>Piscirickettsiaceae</taxon>
        <taxon>Hydrogenovibrio</taxon>
    </lineage>
</organism>
<reference key="1">
    <citation type="journal article" date="2006" name="PLoS Biol.">
        <title>The genome of deep-sea vent chemolithoautotroph Thiomicrospira crunogena XCL-2.</title>
        <authorList>
            <person name="Scott K.M."/>
            <person name="Sievert S.M."/>
            <person name="Abril F.N."/>
            <person name="Ball L.A."/>
            <person name="Barrett C.J."/>
            <person name="Blake R.A."/>
            <person name="Boller A.J."/>
            <person name="Chain P.S.G."/>
            <person name="Clark J.A."/>
            <person name="Davis C.R."/>
            <person name="Detter C."/>
            <person name="Do K.F."/>
            <person name="Dobrinski K.P."/>
            <person name="Faza B.I."/>
            <person name="Fitzpatrick K.A."/>
            <person name="Freyermuth S.K."/>
            <person name="Harmer T.L."/>
            <person name="Hauser L.J."/>
            <person name="Huegler M."/>
            <person name="Kerfeld C.A."/>
            <person name="Klotz M.G."/>
            <person name="Kong W.W."/>
            <person name="Land M."/>
            <person name="Lapidus A."/>
            <person name="Larimer F.W."/>
            <person name="Longo D.L."/>
            <person name="Lucas S."/>
            <person name="Malfatti S.A."/>
            <person name="Massey S.E."/>
            <person name="Martin D.D."/>
            <person name="McCuddin Z."/>
            <person name="Meyer F."/>
            <person name="Moore J.L."/>
            <person name="Ocampo L.H. Jr."/>
            <person name="Paul J.H."/>
            <person name="Paulsen I.T."/>
            <person name="Reep D.K."/>
            <person name="Ren Q."/>
            <person name="Ross R.L."/>
            <person name="Sato P.Y."/>
            <person name="Thomas P."/>
            <person name="Tinkham L.E."/>
            <person name="Zeruth G.T."/>
        </authorList>
    </citation>
    <scope>NUCLEOTIDE SEQUENCE [LARGE SCALE GENOMIC DNA]</scope>
    <source>
        <strain>DSM 25203 / XCL-2</strain>
    </source>
</reference>
<feature type="chain" id="PRO_0000241837" description="UPF0178 protein Tcr_1995">
    <location>
        <begin position="1"/>
        <end position="151"/>
    </location>
</feature>
<feature type="region of interest" description="Disordered" evidence="2">
    <location>
        <begin position="116"/>
        <end position="135"/>
    </location>
</feature>
<dbReference type="EMBL" id="CP000109">
    <property type="protein sequence ID" value="ABB42585.1"/>
    <property type="molecule type" value="Genomic_DNA"/>
</dbReference>
<dbReference type="STRING" id="317025.Tcr_1995"/>
<dbReference type="KEGG" id="tcx:Tcr_1995"/>
<dbReference type="eggNOG" id="COG1671">
    <property type="taxonomic scope" value="Bacteria"/>
</dbReference>
<dbReference type="HOGENOM" id="CLU_106619_1_0_6"/>
<dbReference type="OrthoDB" id="9798918at2"/>
<dbReference type="CDD" id="cd18720">
    <property type="entry name" value="PIN_YqxD-like"/>
    <property type="match status" value="1"/>
</dbReference>
<dbReference type="HAMAP" id="MF_00489">
    <property type="entry name" value="UPF0178"/>
    <property type="match status" value="1"/>
</dbReference>
<dbReference type="InterPro" id="IPR003791">
    <property type="entry name" value="UPF0178"/>
</dbReference>
<dbReference type="NCBIfam" id="NF001095">
    <property type="entry name" value="PRK00124.1"/>
    <property type="match status" value="1"/>
</dbReference>
<dbReference type="PANTHER" id="PTHR35146">
    <property type="entry name" value="UPF0178 PROTEIN YAII"/>
    <property type="match status" value="1"/>
</dbReference>
<dbReference type="PANTHER" id="PTHR35146:SF1">
    <property type="entry name" value="UPF0178 PROTEIN YAII"/>
    <property type="match status" value="1"/>
</dbReference>
<dbReference type="Pfam" id="PF02639">
    <property type="entry name" value="DUF188"/>
    <property type="match status" value="1"/>
</dbReference>
<comment type="similarity">
    <text evidence="1">Belongs to the UPF0178 family.</text>
</comment>
<accession>Q31E38</accession>
<sequence>MHIWVDADACPVVIKEILFKAAQRAKVQMTLVANHTMRIPKSSYIDFLQVTQGFDIADNEIVKRLSDNDLVITADIPLAAEAIENGAIALNPRGELYTTENIRARLNMRDFMDSLRSSGVDTGGPPPLNQKDRQAFANNLDRLLTRYARQR</sequence>
<protein>
    <recommendedName>
        <fullName evidence="1">UPF0178 protein Tcr_1995</fullName>
    </recommendedName>
</protein>
<proteinExistence type="inferred from homology"/>
<gene>
    <name type="ordered locus">Tcr_1995</name>
</gene>
<evidence type="ECO:0000255" key="1">
    <source>
        <dbReference type="HAMAP-Rule" id="MF_00489"/>
    </source>
</evidence>
<evidence type="ECO:0000256" key="2">
    <source>
        <dbReference type="SAM" id="MobiDB-lite"/>
    </source>
</evidence>
<name>Y1995_HYDCU</name>